<comment type="function">
    <text evidence="5 6 10">Component of the telomerase ribonucleoprotein (RNP) complex that is essential for the replication of chromosome termini (PubMed:19179534). May have a general role in telomere regulation (PubMed:12676087, PubMed:12699629). Promotes in vitro the ability of TERT to elongate telomeres (PubMed:12676087, PubMed:12699629). Overexpression induces telomere uncapping, chromosomal end-to-end fusions (telomeric DNA persists at the fusion points) and did not perturb TRF2 telomeric localization (PubMed:12676087, PubMed:12699629). Binds to the single-stranded 5'-(GTGTGG)(4)GTGT-3' telomeric DNA, but not to a telomerase RNA template component (TER) (PubMed:12676087, PubMed:12699629).</text>
</comment>
<comment type="function">
    <text evidence="7 8 9 11">Plays a role in nonsense-mediated mRNA decay (PubMed:17053788, PubMed:18974281, PubMed:19060897, PubMed:20930030). Is thought to provide a link to the mRNA degradation machinery as it has endonuclease activity required to initiate NMD, and to serve as an adapter for UPF1 to protein phosphatase 2A (PP2A), thereby triggering UPF1 dephosphorylation (PubMed:17053788, PubMed:18974281, PubMed:19060897, PubMed:20930030). Degrades single-stranded RNA (ssRNA), but not ssDNA or dsRNA (PubMed:17053788, PubMed:18974281, PubMed:19060897, PubMed:20930030).</text>
</comment>
<comment type="cofactor">
    <cofactor evidence="7">
        <name>Mn(2+)</name>
        <dbReference type="ChEBI" id="CHEBI:29035"/>
    </cofactor>
</comment>
<comment type="subunit">
    <text evidence="4 5 6 9 10 11 12">May form homooligomers (PubMed:20930030). Associated component of the telomerase holoenzyme complex (PubMed:19179534). Interacts with TERT, independently of the telomerase RNA (PubMed:12676087, PubMed:12699629). Interacts with SMG1, SMG5, SMG7, UPF1, UPF2, UPF3B and the PP2A catalytic subunits (PubMed:12554878, PubMed:19060897, PubMed:20930030). Also interacts with the exon junction complex (EJC) composed at least of CASC3, EIF4A3, MAGOH and RBM8A; required for the process of nonsense-mediated mRNA decay (PubMed:20930030). Interacts with DHX34; the interaction is RNA-independent (PubMed:25220460).</text>
</comment>
<comment type="interaction">
    <interactant intactId="EBI-3232100">
        <id>Q86US8</id>
    </interactant>
    <interactant intactId="EBI-718729">
        <id>P55212</id>
        <label>CASP6</label>
    </interactant>
    <organismsDiffer>false</organismsDiffer>
    <experiments>3</experiments>
</comment>
<comment type="interaction">
    <interactant intactId="EBI-3232100">
        <id>Q86US8</id>
    </interactant>
    <interactant intactId="EBI-473886">
        <id>O00291</id>
        <label>HIP1</label>
    </interactant>
    <organismsDiffer>false</organismsDiffer>
    <experiments>3</experiments>
</comment>
<comment type="interaction">
    <interactant intactId="EBI-3232100">
        <id>Q86US8</id>
    </interactant>
    <interactant intactId="EBI-21591415">
        <id>P13473-2</id>
        <label>LAMP2</label>
    </interactant>
    <organismsDiffer>false</organismsDiffer>
    <experiments>3</experiments>
</comment>
<comment type="interaction">
    <interactant intactId="EBI-3232100">
        <id>Q86US8</id>
    </interactant>
    <interactant intactId="EBI-16439278">
        <id>Q6FHY5</id>
        <label>MEOX2</label>
    </interactant>
    <organismsDiffer>false</organismsDiffer>
    <experiments>3</experiments>
</comment>
<comment type="interaction">
    <interactant intactId="EBI-3232100">
        <id>Q86US8</id>
    </interactant>
    <interactant intactId="EBI-5280197">
        <id>O75400-2</id>
        <label>PRPF40A</label>
    </interactant>
    <organismsDiffer>false</organismsDiffer>
    <experiments>3</experiments>
</comment>
<comment type="interaction">
    <interactant intactId="EBI-3232100">
        <id>Q86US8</id>
    </interactant>
    <interactant intactId="EBI-286642">
        <id>P62826</id>
        <label>RAN</label>
    </interactant>
    <organismsDiffer>false</organismsDiffer>
    <experiments>3</experiments>
</comment>
<comment type="interaction">
    <interactant intactId="EBI-3232100">
        <id>Q86US8</id>
    </interactant>
    <interactant intactId="EBI-373492">
        <id>Q92900-2</id>
        <label>UPF1</label>
    </interactant>
    <organismsDiffer>false</organismsDiffer>
    <experiments>2</experiments>
</comment>
<comment type="subcellular location">
    <subcellularLocation>
        <location evidence="5">Nucleus</location>
        <location evidence="5">Nucleolus</location>
    </subcellularLocation>
    <subcellularLocation>
        <location evidence="19">Chromosome</location>
        <location evidence="19">Telomere</location>
    </subcellularLocation>
    <subcellularLocation>
        <location evidence="5">Cytoplasm</location>
        <location evidence="5">Cytosol</location>
    </subcellularLocation>
    <text evidence="5">Particularly enriched in the nucleolus.</text>
</comment>
<comment type="alternative products">
    <event type="alternative splicing"/>
    <isoform>
        <id>Q86US8-1</id>
        <name>1</name>
        <sequence type="displayed"/>
    </isoform>
    <isoform>
        <id>Q86US8-2</id>
        <name>2</name>
        <sequence type="described" ref="VSP_010360 VSP_010361"/>
    </isoform>
    <isoform>
        <id>Q86US8-3</id>
        <name>3</name>
        <sequence type="described" ref="VSP_047157"/>
    </isoform>
</comment>
<comment type="tissue specificity">
    <text evidence="5 6">Ubiquitous.</text>
</comment>
<comment type="domain">
    <text evidence="8 9">The PINc domain confers endonuclease activity and is expected to bind the catalytic metal ion.</text>
</comment>
<comment type="sequence caution" evidence="18">
    <conflict type="erroneous initiation">
        <sequence resource="EMBL-CDS" id="AAH64916"/>
    </conflict>
    <text>Truncated N-terminus.</text>
</comment>
<comment type="sequence caution" evidence="18">
    <conflict type="erroneous initiation">
        <sequence resource="EMBL-CDS" id="BAA34452"/>
    </conflict>
    <text>Extended N-terminus.</text>
</comment>
<gene>
    <name evidence="20" type="primary">SMG6</name>
    <name evidence="20" type="synonym">C17orf31</name>
    <name evidence="20" type="synonym">EST1A</name>
    <name evidence="20" type="synonym">KIAA0732</name>
</gene>
<name>EST1A_HUMAN</name>
<accession>Q86US8</accession>
<accession>B7Z874</accession>
<accession>O94837</accession>
<accession>Q86VH6</accession>
<accession>Q9UF60</accession>
<organism>
    <name type="scientific">Homo sapiens</name>
    <name type="common">Human</name>
    <dbReference type="NCBI Taxonomy" id="9606"/>
    <lineage>
        <taxon>Eukaryota</taxon>
        <taxon>Metazoa</taxon>
        <taxon>Chordata</taxon>
        <taxon>Craniata</taxon>
        <taxon>Vertebrata</taxon>
        <taxon>Euteleostomi</taxon>
        <taxon>Mammalia</taxon>
        <taxon>Eutheria</taxon>
        <taxon>Euarchontoglires</taxon>
        <taxon>Primates</taxon>
        <taxon>Haplorrhini</taxon>
        <taxon>Catarrhini</taxon>
        <taxon>Hominidae</taxon>
        <taxon>Homo</taxon>
    </lineage>
</organism>
<sequence length="1419" mass="160462">MAEGLERVRISASELRGILATLAPQAGSRENMKELKEARPRKDNRRPDLEIYKPGLSRLRNKPKIKEPPGSEEFKDEIVNDRDCSAVENGTQPVKDVCKELNNQEQNGPIDPENNRGQESFPRTAGQEDRSLKIIKRTKKPDLQIYQPGRRLQTVSKESASRVEEEEVLNQVEQLRVEEDECRGNVAKEEVANKPDRAEIEKSPGGGRVGAAKGEKGKRMGKGEGVRETHDDPARGRPGSAKRYSRSDKRRNRYRTRSTSSAGSNNSAEGAGLTDNGCRRRRQDRTKERPRLKKQVSVSSTDSLDEDRIDEPDGLGPRRSSERKRHLERNWSGRGEGEQKNSAKEYRGTLRVTFDAEAMNKESPMVRSARDDMDRGKPDKGLSSGGKGSEKQESKNPKQELRGRGRGILILPAHTTLSVNSAGSPESAPLGPRLLFGSGSKGSRSWGRGGTTRRLWDPNNPDQKPALKTQTPQLHFLDTDDEVSPTSWGDSRQAQASYYKFQNSDNPYYYPRTPGPASQYPYTGYNPLQYPVGPTNGVYPGPYYPGYPTPSGQYVCSPLPTSTMSPEEVEQHMRNLQQQELHRLLRVADNQELQLSNLLSRDRISPEGLEKMAQLRAELLQLYERCILLDIEFSDNQNVDQILWKNAFYQVIEKFRQLVKDPNVENPEQIRNRLLELLDEGSDFFDSLLQKLQVTYKFKLEDYMDGLAIRSKPLRKTVKYALISAQRCMICQGDIARYREQASDTANYGKARSWYLKAQHIAPKNGRPYNQLALLAVYTRRKLDAVYYYMRSLAASNPILTAKESLMSLFEETKRKAEQMEKKQHEEFDLSPDQWRKGKKSTFRHVGDDTTRLEIWIHPSHPRSSQGTESGKDSEQENGLGSLSPSDLNKRFILSFLHAHGKLFTRIGMETFPAVAEKVLKEFQVLLQHSPSPIGSTRMLQLMTINMFAVHNSQLKDCFSEECRSVIQEQAAALGLAMFSLLVRRCTCLLKESAKAQLSSPEDQDDQDDIKVSSFVPDLKELLPSVKVWSDWMLGYPDTWNPPPTSLDLPSHVAVDVWSTLADFCNILTAVNQSEVPLYKDPDDDLTLLILEEDRLLSGFVPLLAAPQDPCYVEKTSDKVIAADCKRVTVLKYFLEALCGQEEPLLAFKGGKYVSVAPVPDTMGKEMGSQEGTRLEDEEEDVVIEDFEEDSEAEGSGGEDDIRELRAKKLALARKIAEQQRRQEKIQAVLEDHSQMRQMELEIRPLFLVPDTNGFIDHLASLARLLESRKYILVVPLIVINELDGLAKGQETDHRAGGYARVVQEKARKSIEFLEQRFESRDSCLRALTSRGNELESIAFRSEDITGQLGNNDDLILSCCLHYCKDKAKDFMPASKEEPIRLLREVVLLTDDRNLRVKALTRNVPVRDIPAFLTWAQVG</sequence>
<reference key="1">
    <citation type="journal article" date="2003" name="Curr. Biol.">
        <title>A human homolog of yeast est1 associates with telomerase and uncaps chromosome ends when overexpressed.</title>
        <authorList>
            <person name="Reichenbach P."/>
            <person name="Hoess M."/>
            <person name="Azzalin C.M."/>
            <person name="Nabholz M."/>
            <person name="Bucher P."/>
            <person name="Lingner J."/>
        </authorList>
    </citation>
    <scope>NUCLEOTIDE SEQUENCE [MRNA] (ISOFORM 1)</scope>
    <scope>VARIANT THR-341</scope>
    <scope>FUNCTION IN TELOMERE REGULATION</scope>
    <scope>TISSUE SPECIFICITY</scope>
    <scope>SUBCELLULAR LOCATION</scope>
    <scope>IDENTIFICATION IN THE TELOMERASE RIBONUCLEOPROTEIN COMPLEX</scope>
    <source>
        <tissue>Cervix carcinoma</tissue>
    </source>
</reference>
<reference key="2">
    <citation type="journal article" date="1998" name="DNA Res.">
        <title>Prediction of the coding sequences of unidentified human genes. XI. The complete sequences of 100 new cDNA clones from brain which code for large proteins in vitro.</title>
        <authorList>
            <person name="Nagase T."/>
            <person name="Ishikawa K."/>
            <person name="Suyama M."/>
            <person name="Kikuno R."/>
            <person name="Miyajima N."/>
            <person name="Tanaka A."/>
            <person name="Kotani H."/>
            <person name="Nomura N."/>
            <person name="Ohara O."/>
        </authorList>
    </citation>
    <scope>NUCLEOTIDE SEQUENCE [LARGE SCALE MRNA] (ISOFORM 1)</scope>
    <scope>VARIANTS PRO-291 AND THR-341</scope>
    <source>
        <tissue>Brain</tissue>
    </source>
</reference>
<reference key="3">
    <citation type="journal article" date="2002" name="DNA Res.">
        <title>Construction of expression-ready cDNA clones for KIAA genes: manual curation of 330 KIAA cDNA clones.</title>
        <authorList>
            <person name="Nakajima D."/>
            <person name="Okazaki N."/>
            <person name="Yamakawa H."/>
            <person name="Kikuno R."/>
            <person name="Ohara O."/>
            <person name="Nagase T."/>
        </authorList>
    </citation>
    <scope>SEQUENCE REVISION</scope>
</reference>
<reference key="4">
    <citation type="journal article" date="2007" name="BMC Genomics">
        <title>The full-ORF clone resource of the German cDNA consortium.</title>
        <authorList>
            <person name="Bechtel S."/>
            <person name="Rosenfelder H."/>
            <person name="Duda A."/>
            <person name="Schmidt C.P."/>
            <person name="Ernst U."/>
            <person name="Wellenreuther R."/>
            <person name="Mehrle A."/>
            <person name="Schuster C."/>
            <person name="Bahr A."/>
            <person name="Bloecker H."/>
            <person name="Heubner D."/>
            <person name="Hoerlein A."/>
            <person name="Michel G."/>
            <person name="Wedler H."/>
            <person name="Koehrer K."/>
            <person name="Ottenwaelder B."/>
            <person name="Poustka A."/>
            <person name="Wiemann S."/>
            <person name="Schupp I."/>
        </authorList>
    </citation>
    <scope>NUCLEOTIDE SEQUENCE [LARGE SCALE MRNA] (ISOFORM 2)</scope>
    <source>
        <tissue>Testis</tissue>
    </source>
</reference>
<reference key="5">
    <citation type="journal article" date="2003" name="Curr. Biol.">
        <title>Functional conservation of the telomerase protein Est1p in humans.</title>
        <authorList>
            <person name="Snow B.E."/>
            <person name="Erdmann N."/>
            <person name="Cruickshank J."/>
            <person name="Goldman H."/>
            <person name="Gill R.M."/>
            <person name="Robinson M.O."/>
            <person name="Harrington L."/>
        </authorList>
    </citation>
    <scope>NUCLEOTIDE SEQUENCE [MRNA] OF 32-1419 (ISOFORM 1)</scope>
    <scope>FUNCTION IN TELOMERE REGULATION</scope>
    <scope>TISSUE SPECIFICITY</scope>
    <scope>SINGLE-STRANDED TELOMERE DNA-BINDING</scope>
    <scope>IDENTIFICATION IN THE TELOMERASE RIBONUCLEOPROTEIN COMPLEX</scope>
    <scope>INTERACTION WITH TERT</scope>
</reference>
<reference key="6">
    <citation type="journal article" date="2004" name="Nat. Genet.">
        <title>Complete sequencing and characterization of 21,243 full-length human cDNAs.</title>
        <authorList>
            <person name="Ota T."/>
            <person name="Suzuki Y."/>
            <person name="Nishikawa T."/>
            <person name="Otsuki T."/>
            <person name="Sugiyama T."/>
            <person name="Irie R."/>
            <person name="Wakamatsu A."/>
            <person name="Hayashi K."/>
            <person name="Sato H."/>
            <person name="Nagai K."/>
            <person name="Kimura K."/>
            <person name="Makita H."/>
            <person name="Sekine M."/>
            <person name="Obayashi M."/>
            <person name="Nishi T."/>
            <person name="Shibahara T."/>
            <person name="Tanaka T."/>
            <person name="Ishii S."/>
            <person name="Yamamoto J."/>
            <person name="Saito K."/>
            <person name="Kawai Y."/>
            <person name="Isono Y."/>
            <person name="Nakamura Y."/>
            <person name="Nagahari K."/>
            <person name="Murakami K."/>
            <person name="Yasuda T."/>
            <person name="Iwayanagi T."/>
            <person name="Wagatsuma M."/>
            <person name="Shiratori A."/>
            <person name="Sudo H."/>
            <person name="Hosoiri T."/>
            <person name="Kaku Y."/>
            <person name="Kodaira H."/>
            <person name="Kondo H."/>
            <person name="Sugawara M."/>
            <person name="Takahashi M."/>
            <person name="Kanda K."/>
            <person name="Yokoi T."/>
            <person name="Furuya T."/>
            <person name="Kikkawa E."/>
            <person name="Omura Y."/>
            <person name="Abe K."/>
            <person name="Kamihara K."/>
            <person name="Katsuta N."/>
            <person name="Sato K."/>
            <person name="Tanikawa M."/>
            <person name="Yamazaki M."/>
            <person name="Ninomiya K."/>
            <person name="Ishibashi T."/>
            <person name="Yamashita H."/>
            <person name="Murakawa K."/>
            <person name="Fujimori K."/>
            <person name="Tanai H."/>
            <person name="Kimata M."/>
            <person name="Watanabe M."/>
            <person name="Hiraoka S."/>
            <person name="Chiba Y."/>
            <person name="Ishida S."/>
            <person name="Ono Y."/>
            <person name="Takiguchi S."/>
            <person name="Watanabe S."/>
            <person name="Yosida M."/>
            <person name="Hotuta T."/>
            <person name="Kusano J."/>
            <person name="Kanehori K."/>
            <person name="Takahashi-Fujii A."/>
            <person name="Hara H."/>
            <person name="Tanase T.-O."/>
            <person name="Nomura Y."/>
            <person name="Togiya S."/>
            <person name="Komai F."/>
            <person name="Hara R."/>
            <person name="Takeuchi K."/>
            <person name="Arita M."/>
            <person name="Imose N."/>
            <person name="Musashino K."/>
            <person name="Yuuki H."/>
            <person name="Oshima A."/>
            <person name="Sasaki N."/>
            <person name="Aotsuka S."/>
            <person name="Yoshikawa Y."/>
            <person name="Matsunawa H."/>
            <person name="Ichihara T."/>
            <person name="Shiohata N."/>
            <person name="Sano S."/>
            <person name="Moriya S."/>
            <person name="Momiyama H."/>
            <person name="Satoh N."/>
            <person name="Takami S."/>
            <person name="Terashima Y."/>
            <person name="Suzuki O."/>
            <person name="Nakagawa S."/>
            <person name="Senoh A."/>
            <person name="Mizoguchi H."/>
            <person name="Goto Y."/>
            <person name="Shimizu F."/>
            <person name="Wakebe H."/>
            <person name="Hishigaki H."/>
            <person name="Watanabe T."/>
            <person name="Sugiyama A."/>
            <person name="Takemoto M."/>
            <person name="Kawakami B."/>
            <person name="Yamazaki M."/>
            <person name="Watanabe K."/>
            <person name="Kumagai A."/>
            <person name="Itakura S."/>
            <person name="Fukuzumi Y."/>
            <person name="Fujimori Y."/>
            <person name="Komiyama M."/>
            <person name="Tashiro H."/>
            <person name="Tanigami A."/>
            <person name="Fujiwara T."/>
            <person name="Ono T."/>
            <person name="Yamada K."/>
            <person name="Fujii Y."/>
            <person name="Ozaki K."/>
            <person name="Hirao M."/>
            <person name="Ohmori Y."/>
            <person name="Kawabata A."/>
            <person name="Hikiji T."/>
            <person name="Kobatake N."/>
            <person name="Inagaki H."/>
            <person name="Ikema Y."/>
            <person name="Okamoto S."/>
            <person name="Okitani R."/>
            <person name="Kawakami T."/>
            <person name="Noguchi S."/>
            <person name="Itoh T."/>
            <person name="Shigeta K."/>
            <person name="Senba T."/>
            <person name="Matsumura K."/>
            <person name="Nakajima Y."/>
            <person name="Mizuno T."/>
            <person name="Morinaga M."/>
            <person name="Sasaki M."/>
            <person name="Togashi T."/>
            <person name="Oyama M."/>
            <person name="Hata H."/>
            <person name="Watanabe M."/>
            <person name="Komatsu T."/>
            <person name="Mizushima-Sugano J."/>
            <person name="Satoh T."/>
            <person name="Shirai Y."/>
            <person name="Takahashi Y."/>
            <person name="Nakagawa K."/>
            <person name="Okumura K."/>
            <person name="Nagase T."/>
            <person name="Nomura N."/>
            <person name="Kikuchi H."/>
            <person name="Masuho Y."/>
            <person name="Yamashita R."/>
            <person name="Nakai K."/>
            <person name="Yada T."/>
            <person name="Nakamura Y."/>
            <person name="Ohara O."/>
            <person name="Isogai T."/>
            <person name="Sugano S."/>
        </authorList>
    </citation>
    <scope>NUCLEOTIDE SEQUENCE [LARGE SCALE MRNA] (ISOFORM 3)</scope>
    <source>
        <tissue>Testis</tissue>
    </source>
</reference>
<reference key="7">
    <citation type="journal article" date="2006" name="Nature">
        <title>DNA sequence of human chromosome 17 and analysis of rearrangement in the human lineage.</title>
        <authorList>
            <person name="Zody M.C."/>
            <person name="Garber M."/>
            <person name="Adams D.J."/>
            <person name="Sharpe T."/>
            <person name="Harrow J."/>
            <person name="Lupski J.R."/>
            <person name="Nicholson C."/>
            <person name="Searle S.M."/>
            <person name="Wilming L."/>
            <person name="Young S.K."/>
            <person name="Abouelleil A."/>
            <person name="Allen N.R."/>
            <person name="Bi W."/>
            <person name="Bloom T."/>
            <person name="Borowsky M.L."/>
            <person name="Bugalter B.E."/>
            <person name="Butler J."/>
            <person name="Chang J.L."/>
            <person name="Chen C.-K."/>
            <person name="Cook A."/>
            <person name="Corum B."/>
            <person name="Cuomo C.A."/>
            <person name="de Jong P.J."/>
            <person name="DeCaprio D."/>
            <person name="Dewar K."/>
            <person name="FitzGerald M."/>
            <person name="Gilbert J."/>
            <person name="Gibson R."/>
            <person name="Gnerre S."/>
            <person name="Goldstein S."/>
            <person name="Grafham D.V."/>
            <person name="Grocock R."/>
            <person name="Hafez N."/>
            <person name="Hagopian D.S."/>
            <person name="Hart E."/>
            <person name="Norman C.H."/>
            <person name="Humphray S."/>
            <person name="Jaffe D.B."/>
            <person name="Jones M."/>
            <person name="Kamal M."/>
            <person name="Khodiyar V.K."/>
            <person name="LaButti K."/>
            <person name="Laird G."/>
            <person name="Lehoczky J."/>
            <person name="Liu X."/>
            <person name="Lokyitsang T."/>
            <person name="Loveland J."/>
            <person name="Lui A."/>
            <person name="Macdonald P."/>
            <person name="Major J.E."/>
            <person name="Matthews L."/>
            <person name="Mauceli E."/>
            <person name="McCarroll S.A."/>
            <person name="Mihalev A.H."/>
            <person name="Mudge J."/>
            <person name="Nguyen C."/>
            <person name="Nicol R."/>
            <person name="O'Leary S.B."/>
            <person name="Osoegawa K."/>
            <person name="Schwartz D.C."/>
            <person name="Shaw-Smith C."/>
            <person name="Stankiewicz P."/>
            <person name="Steward C."/>
            <person name="Swarbreck D."/>
            <person name="Venkataraman V."/>
            <person name="Whittaker C.A."/>
            <person name="Yang X."/>
            <person name="Zimmer A.R."/>
            <person name="Bradley A."/>
            <person name="Hubbard T."/>
            <person name="Birren B.W."/>
            <person name="Rogers J."/>
            <person name="Lander E.S."/>
            <person name="Nusbaum C."/>
        </authorList>
    </citation>
    <scope>NUCLEOTIDE SEQUENCE [LARGE SCALE GENOMIC DNA]</scope>
</reference>
<reference key="8">
    <citation type="submission" date="2005-07" db="EMBL/GenBank/DDBJ databases">
        <authorList>
            <person name="Mural R.J."/>
            <person name="Istrail S."/>
            <person name="Sutton G.G."/>
            <person name="Florea L."/>
            <person name="Halpern A.L."/>
            <person name="Mobarry C.M."/>
            <person name="Lippert R."/>
            <person name="Walenz B."/>
            <person name="Shatkay H."/>
            <person name="Dew I."/>
            <person name="Miller J.R."/>
            <person name="Flanigan M.J."/>
            <person name="Edwards N.J."/>
            <person name="Bolanos R."/>
            <person name="Fasulo D."/>
            <person name="Halldorsson B.V."/>
            <person name="Hannenhalli S."/>
            <person name="Turner R."/>
            <person name="Yooseph S."/>
            <person name="Lu F."/>
            <person name="Nusskern D.R."/>
            <person name="Shue B.C."/>
            <person name="Zheng X.H."/>
            <person name="Zhong F."/>
            <person name="Delcher A.L."/>
            <person name="Huson D.H."/>
            <person name="Kravitz S.A."/>
            <person name="Mouchard L."/>
            <person name="Reinert K."/>
            <person name="Remington K.A."/>
            <person name="Clark A.G."/>
            <person name="Waterman M.S."/>
            <person name="Eichler E.E."/>
            <person name="Adams M.D."/>
            <person name="Hunkapiller M.W."/>
            <person name="Myers E.W."/>
            <person name="Venter J.C."/>
        </authorList>
    </citation>
    <scope>NUCLEOTIDE SEQUENCE [LARGE SCALE GENOMIC DNA]</scope>
</reference>
<reference key="9">
    <citation type="journal article" date="2004" name="Genome Res.">
        <title>The status, quality, and expansion of the NIH full-length cDNA project: the Mammalian Gene Collection (MGC).</title>
        <authorList>
            <consortium name="The MGC Project Team"/>
        </authorList>
    </citation>
    <scope>NUCLEOTIDE SEQUENCE [LARGE SCALE MRNA] OF 888-1419 (ISOFORM 1)</scope>
    <source>
        <tissue>Testis</tissue>
    </source>
</reference>
<reference key="10">
    <citation type="journal article" date="2003" name="RNA">
        <title>Characterization of human Smg5/7a: a protein with similarities to Caenorhabditis elegans SMG5 and SMG7 that functions in the dephosphorylation of Upf1.</title>
        <authorList>
            <person name="Chiu S.-Y."/>
            <person name="Serin G."/>
            <person name="Ohara O."/>
            <person name="Maquat L.E."/>
        </authorList>
    </citation>
    <scope>INTERACTION WITH PP2A CATALYTIC SUBUNITS; SMG1; UPF1; UPF2 AND UPF3B</scope>
</reference>
<reference key="11">
    <citation type="journal article" date="2008" name="Proc. Natl. Acad. Sci. U.S.A.">
        <title>A quantitative atlas of mitotic phosphorylation.</title>
        <authorList>
            <person name="Dephoure N."/>
            <person name="Zhou C."/>
            <person name="Villen J."/>
            <person name="Beausoleil S.A."/>
            <person name="Bakalarski C.E."/>
            <person name="Elledge S.J."/>
            <person name="Gygi S.P."/>
        </authorList>
    </citation>
    <scope>IDENTIFICATION BY MASS SPECTROMETRY [LARGE SCALE ANALYSIS]</scope>
    <source>
        <tissue>Cervix carcinoma</tissue>
    </source>
</reference>
<reference key="12">
    <citation type="journal article" date="2008" name="RNA">
        <title>SMG6 is the catalytic endonuclease that cleaves mRNAs containing nonsense codons in metazoan.</title>
        <authorList>
            <person name="Huntzinger E."/>
            <person name="Kashima I."/>
            <person name="Fauser M."/>
            <person name="Sauliere J."/>
            <person name="Izaurralde E."/>
        </authorList>
    </citation>
    <scope>FUNCTION IN NONSENSE-MEDIATED MRNA DECAY</scope>
    <scope>CATALYTIC ACTIVITY</scope>
    <scope>DOMAIN</scope>
    <scope>MUTAGENESIS OF ASP-1251 AND ASP-1392</scope>
</reference>
<reference key="13">
    <citation type="journal article" date="2009" name="Nat. Struct. Mol. Biol.">
        <title>SMG6 promotes endonucleolytic cleavage of nonsense mRNA in human cells.</title>
        <authorList>
            <person name="Eberle A.B."/>
            <person name="Lykke-Andersen S."/>
            <person name="Muhlemann O."/>
            <person name="Jensen T.H."/>
        </authorList>
    </citation>
    <scope>FUNCTION IN NONSENSE-MEDIATED MRNA DECAY</scope>
    <scope>CATALYTIC ACTIVITY</scope>
    <scope>DOMAIN</scope>
    <scope>SUBCELLULAR LOCATION</scope>
    <scope>INTERACTION WITH UPF1</scope>
    <scope>MUTAGENESIS OF ASP-1251; ASP-1353 AND ASP-1392</scope>
</reference>
<reference key="14">
    <citation type="journal article" date="2009" name="Sci. Signal.">
        <title>Quantitative phosphoproteomic analysis of T cell receptor signaling reveals system-wide modulation of protein-protein interactions.</title>
        <authorList>
            <person name="Mayya V."/>
            <person name="Lundgren D.H."/>
            <person name="Hwang S.-I."/>
            <person name="Rezaul K."/>
            <person name="Wu L."/>
            <person name="Eng J.K."/>
            <person name="Rodionov V."/>
            <person name="Han D.K."/>
        </authorList>
    </citation>
    <scope>PHOSPHORYLATION [LARGE SCALE ANALYSIS] AT THR-479</scope>
    <scope>IDENTIFICATION BY MASS SPECTROMETRY [LARGE SCALE ANALYSIS]</scope>
    <source>
        <tissue>Leukemic T-cell</tissue>
    </source>
</reference>
<reference key="15">
    <citation type="journal article" date="2009" name="Science">
        <title>A human telomerase holoenzyme protein required for Cajal body localization and telomere synthesis.</title>
        <authorList>
            <person name="Venteicher A.S."/>
            <person name="Abreu E.B."/>
            <person name="Meng Z."/>
            <person name="McCann K.E."/>
            <person name="Terns R.M."/>
            <person name="Veenstra T.D."/>
            <person name="Terns M.P."/>
            <person name="Artandi S.E."/>
        </authorList>
    </citation>
    <scope>IDENTIFICATION IN THE TELOMERASE HOLOENZYME COMPLEX</scope>
</reference>
<reference key="16">
    <citation type="journal article" date="2010" name="Genes Dev.">
        <title>SMG6 interacts with the exon junction complex via two conserved EJC-binding motifs (EBMs) required for nonsense-mediated mRNA decay.</title>
        <authorList>
            <person name="Kashima I."/>
            <person name="Jonas S."/>
            <person name="Jayachandran U."/>
            <person name="Buchwald G."/>
            <person name="Conti E."/>
            <person name="Lupas A.N."/>
            <person name="Izaurralde E."/>
        </authorList>
    </citation>
    <scope>FUNCTION IN NONSENSE-MEDIATED MRNA DECAY</scope>
    <scope>HOMOOLIGOMERIZATION</scope>
    <scope>INTERACTION WITH UPF1; UPF2; UPF3B; SMG5; SMG7 AND THE EXON JUNCTION COMPLEX</scope>
    <scope>MUTAGENESIS OF 46-ARG--TYR-52 AND 140-LYS--TYR-146</scope>
</reference>
<reference key="17">
    <citation type="journal article" date="2011" name="BMC Syst. Biol.">
        <title>Initial characterization of the human central proteome.</title>
        <authorList>
            <person name="Burkard T.R."/>
            <person name="Planyavsky M."/>
            <person name="Kaupe I."/>
            <person name="Breitwieser F.P."/>
            <person name="Buerckstuemmer T."/>
            <person name="Bennett K.L."/>
            <person name="Superti-Furga G."/>
            <person name="Colinge J."/>
        </authorList>
    </citation>
    <scope>IDENTIFICATION BY MASS SPECTROMETRY [LARGE SCALE ANALYSIS]</scope>
</reference>
<reference key="18">
    <citation type="journal article" date="2013" name="J. Proteome Res.">
        <title>Toward a comprehensive characterization of a human cancer cell phosphoproteome.</title>
        <authorList>
            <person name="Zhou H."/>
            <person name="Di Palma S."/>
            <person name="Preisinger C."/>
            <person name="Peng M."/>
            <person name="Polat A.N."/>
            <person name="Heck A.J."/>
            <person name="Mohammed S."/>
        </authorList>
    </citation>
    <scope>PHOSPHORYLATION [LARGE SCALE ANALYSIS] AT SER-203; THR-479; SER-484; SER-831; SER-870 AND SER-874</scope>
    <scope>IDENTIFICATION BY MASS SPECTROMETRY [LARGE SCALE ANALYSIS]</scope>
    <source>
        <tissue>Cervix carcinoma</tissue>
        <tissue>Erythroleukemia</tissue>
    </source>
</reference>
<reference key="19">
    <citation type="journal article" date="2014" name="Cell Rep.">
        <title>The RNA helicase DHX34 activates NMD by promoting a transition from the surveillance to the decay-inducing complex.</title>
        <authorList>
            <person name="Hug N."/>
            <person name="Caceres J.F."/>
        </authorList>
    </citation>
    <scope>INTERACTION WITH DHX34</scope>
</reference>
<reference key="20">
    <citation type="journal article" date="2006" name="EMBO J.">
        <title>Structures of the PIN domains of SMG6 and SMG5 reveal a nuclease within the mRNA surveillance complex.</title>
        <authorList>
            <person name="Glavan F."/>
            <person name="Behm-Ansmant I."/>
            <person name="Izaurralde E."/>
            <person name="Conti E."/>
        </authorList>
    </citation>
    <scope>X-RAY CRYSTALLOGRAPHY (1.80 ANGSTROMS) OF 1239-1419</scope>
    <scope>FUNCTION</scope>
    <scope>COFACTOR</scope>
    <scope>CATALYTIC ACTIVITY</scope>
    <scope>MUTAGENESIS OF ASP-1353</scope>
</reference>
<reference key="21">
    <citation type="journal article" date="2007" name="Proteins">
        <title>Crystal structure of the PIN domain of human telomerase-associated protein EST1A.</title>
        <authorList>
            <person name="Takeshita D."/>
            <person name="Zenno S."/>
            <person name="Lee W.C."/>
            <person name="Saigo K."/>
            <person name="Tanokura M."/>
        </authorList>
    </citation>
    <scope>X-RAY CRYSTALLOGRAPHY (1.8 ANGSTROMS) OF 1239-1419</scope>
</reference>
<proteinExistence type="evidence at protein level"/>
<dbReference type="EC" id="3.1.-.-"/>
<dbReference type="EMBL" id="AY145883">
    <property type="protein sequence ID" value="AAN46114.1"/>
    <property type="molecule type" value="mRNA"/>
</dbReference>
<dbReference type="EMBL" id="AB018275">
    <property type="protein sequence ID" value="BAA34452.2"/>
    <property type="status" value="ALT_INIT"/>
    <property type="molecule type" value="mRNA"/>
</dbReference>
<dbReference type="EMBL" id="AL133597">
    <property type="protein sequence ID" value="CAB63733.1"/>
    <property type="molecule type" value="mRNA"/>
</dbReference>
<dbReference type="EMBL" id="AY168921">
    <property type="protein sequence ID" value="AAO17581.1"/>
    <property type="molecule type" value="mRNA"/>
</dbReference>
<dbReference type="EMBL" id="AK302964">
    <property type="protein sequence ID" value="BAH13860.1"/>
    <property type="molecule type" value="mRNA"/>
</dbReference>
<dbReference type="EMBL" id="AC090617">
    <property type="status" value="NOT_ANNOTATED_CDS"/>
    <property type="molecule type" value="Genomic_DNA"/>
</dbReference>
<dbReference type="EMBL" id="AL450226">
    <property type="status" value="NOT_ANNOTATED_CDS"/>
    <property type="molecule type" value="Genomic_DNA"/>
</dbReference>
<dbReference type="EMBL" id="CH471108">
    <property type="protein sequence ID" value="EAW90559.1"/>
    <property type="molecule type" value="Genomic_DNA"/>
</dbReference>
<dbReference type="EMBL" id="BC064916">
    <property type="protein sequence ID" value="AAH64916.1"/>
    <property type="status" value="ALT_INIT"/>
    <property type="molecule type" value="mRNA"/>
</dbReference>
<dbReference type="CCDS" id="CCDS11016.1">
    <molecule id="Q86US8-1"/>
</dbReference>
<dbReference type="CCDS" id="CCDS58498.1">
    <molecule id="Q86US8-3"/>
</dbReference>
<dbReference type="PIR" id="T43475">
    <property type="entry name" value="T43475"/>
</dbReference>
<dbReference type="RefSeq" id="NP_001243756.1">
    <molecule id="Q86US8-3"/>
    <property type="nucleotide sequence ID" value="NM_001256827.2"/>
</dbReference>
<dbReference type="RefSeq" id="NP_001243757.1">
    <molecule id="Q86US8-3"/>
    <property type="nucleotide sequence ID" value="NM_001256828.1"/>
</dbReference>
<dbReference type="RefSeq" id="NP_001269255.1">
    <molecule id="Q86US8-2"/>
    <property type="nucleotide sequence ID" value="NM_001282326.2"/>
</dbReference>
<dbReference type="RefSeq" id="NP_060045.4">
    <molecule id="Q86US8-1"/>
    <property type="nucleotide sequence ID" value="NM_017575.4"/>
</dbReference>
<dbReference type="RefSeq" id="XP_005256626.1">
    <property type="nucleotide sequence ID" value="XM_005256569.3"/>
</dbReference>
<dbReference type="RefSeq" id="XP_005256628.1">
    <molecule id="Q86US8-3"/>
    <property type="nucleotide sequence ID" value="XM_005256571.6"/>
</dbReference>
<dbReference type="RefSeq" id="XP_011522071.1">
    <property type="nucleotide sequence ID" value="XM_011523769.2"/>
</dbReference>
<dbReference type="RefSeq" id="XP_011522077.1">
    <molecule id="Q86US8-3"/>
    <property type="nucleotide sequence ID" value="XM_011523775.3"/>
</dbReference>
<dbReference type="RefSeq" id="XP_016879888.1">
    <molecule id="Q86US8-3"/>
    <property type="nucleotide sequence ID" value="XM_017024399.3"/>
</dbReference>
<dbReference type="RefSeq" id="XP_047291655.1">
    <molecule id="Q86US8-3"/>
    <property type="nucleotide sequence ID" value="XM_047435699.1"/>
</dbReference>
<dbReference type="RefSeq" id="XP_047291656.1">
    <molecule id="Q86US8-2"/>
    <property type="nucleotide sequence ID" value="XM_047435700.1"/>
</dbReference>
<dbReference type="RefSeq" id="XP_054171591.1">
    <molecule id="Q86US8-3"/>
    <property type="nucleotide sequence ID" value="XM_054315616.1"/>
</dbReference>
<dbReference type="RefSeq" id="XP_054171592.1">
    <molecule id="Q86US8-3"/>
    <property type="nucleotide sequence ID" value="XM_054315617.1"/>
</dbReference>
<dbReference type="RefSeq" id="XP_054171593.1">
    <molecule id="Q86US8-3"/>
    <property type="nucleotide sequence ID" value="XM_054315618.1"/>
</dbReference>
<dbReference type="RefSeq" id="XP_054171594.1">
    <molecule id="Q86US8-3"/>
    <property type="nucleotide sequence ID" value="XM_054315619.1"/>
</dbReference>
<dbReference type="PDB" id="2DOK">
    <property type="method" value="X-ray"/>
    <property type="resolution" value="1.80 A"/>
    <property type="chains" value="A/B=1239-1419"/>
</dbReference>
<dbReference type="PDB" id="2HWW">
    <property type="method" value="X-ray"/>
    <property type="resolution" value="1.80 A"/>
    <property type="chains" value="A/B/C=1239-1419"/>
</dbReference>
<dbReference type="PDB" id="2HWX">
    <property type="method" value="X-ray"/>
    <property type="resolution" value="1.90 A"/>
    <property type="chains" value="A=1239-1419"/>
</dbReference>
<dbReference type="PDB" id="4UM2">
    <property type="method" value="X-ray"/>
    <property type="resolution" value="2.10 A"/>
    <property type="chains" value="A=580-1166"/>
</dbReference>
<dbReference type="PDB" id="8RXB">
    <property type="method" value="X-ray"/>
    <property type="resolution" value="2.60 A"/>
    <property type="chains" value="B/F/G/J/N/Q=404-418"/>
</dbReference>
<dbReference type="PDBsum" id="2DOK"/>
<dbReference type="PDBsum" id="2HWW"/>
<dbReference type="PDBsum" id="2HWX"/>
<dbReference type="PDBsum" id="4UM2"/>
<dbReference type="PDBsum" id="8RXB"/>
<dbReference type="SMR" id="Q86US8"/>
<dbReference type="BioGRID" id="116888">
    <property type="interactions" value="91"/>
</dbReference>
<dbReference type="CORUM" id="Q86US8"/>
<dbReference type="FunCoup" id="Q86US8">
    <property type="interactions" value="4277"/>
</dbReference>
<dbReference type="IntAct" id="Q86US8">
    <property type="interactions" value="29"/>
</dbReference>
<dbReference type="MINT" id="Q86US8"/>
<dbReference type="STRING" id="9606.ENSP00000263073"/>
<dbReference type="DrugBank" id="DB05036">
    <property type="generic name" value="Grn163l"/>
</dbReference>
<dbReference type="GlyGen" id="Q86US8">
    <property type="glycosylation" value="4 sites, 1 N-linked glycan (1 site), 1 O-linked glycan (1 site)"/>
</dbReference>
<dbReference type="iPTMnet" id="Q86US8"/>
<dbReference type="MetOSite" id="Q86US8"/>
<dbReference type="PhosphoSitePlus" id="Q86US8"/>
<dbReference type="BioMuta" id="SMG6"/>
<dbReference type="DMDM" id="91771922"/>
<dbReference type="jPOST" id="Q86US8"/>
<dbReference type="MassIVE" id="Q86US8"/>
<dbReference type="PaxDb" id="9606-ENSP00000263073"/>
<dbReference type="PeptideAtlas" id="Q86US8"/>
<dbReference type="ProteomicsDB" id="6930"/>
<dbReference type="ProteomicsDB" id="69880">
    <molecule id="Q86US8-1"/>
</dbReference>
<dbReference type="ProteomicsDB" id="69881">
    <molecule id="Q86US8-2"/>
</dbReference>
<dbReference type="Pumba" id="Q86US8"/>
<dbReference type="Antibodypedia" id="50527">
    <property type="antibodies" value="67 antibodies from 14 providers"/>
</dbReference>
<dbReference type="DNASU" id="23293"/>
<dbReference type="Ensembl" id="ENST00000263073.11">
    <molecule id="Q86US8-1"/>
    <property type="protein sequence ID" value="ENSP00000263073.5"/>
    <property type="gene ID" value="ENSG00000070366.14"/>
</dbReference>
<dbReference type="Ensembl" id="ENST00000354901.8">
    <molecule id="Q86US8-3"/>
    <property type="protein sequence ID" value="ENSP00000346977.4"/>
    <property type="gene ID" value="ENSG00000070366.14"/>
</dbReference>
<dbReference type="Ensembl" id="ENST00000536871.6">
    <molecule id="Q86US8-3"/>
    <property type="protein sequence ID" value="ENSP00000440283.2"/>
    <property type="gene ID" value="ENSG00000070366.14"/>
</dbReference>
<dbReference type="GeneID" id="23293"/>
<dbReference type="KEGG" id="hsa:23293"/>
<dbReference type="MANE-Select" id="ENST00000263073.11">
    <property type="protein sequence ID" value="ENSP00000263073.5"/>
    <property type="RefSeq nucleotide sequence ID" value="NM_017575.5"/>
    <property type="RefSeq protein sequence ID" value="NP_060045.4"/>
</dbReference>
<dbReference type="UCSC" id="uc002fub.2">
    <molecule id="Q86US8-1"/>
    <property type="organism name" value="human"/>
</dbReference>
<dbReference type="AGR" id="HGNC:17809"/>
<dbReference type="CTD" id="23293"/>
<dbReference type="DisGeNET" id="23293"/>
<dbReference type="GeneCards" id="SMG6"/>
<dbReference type="HGNC" id="HGNC:17809">
    <property type="gene designation" value="SMG6"/>
</dbReference>
<dbReference type="HPA" id="ENSG00000070366">
    <property type="expression patterns" value="Low tissue specificity"/>
</dbReference>
<dbReference type="MIM" id="610963">
    <property type="type" value="gene"/>
</dbReference>
<dbReference type="neXtProt" id="NX_Q86US8"/>
<dbReference type="OpenTargets" id="ENSG00000070366"/>
<dbReference type="PharmGKB" id="PA25584"/>
<dbReference type="VEuPathDB" id="HostDB:ENSG00000070366"/>
<dbReference type="eggNOG" id="KOG2162">
    <property type="taxonomic scope" value="Eukaryota"/>
</dbReference>
<dbReference type="GeneTree" id="ENSGT00940000155300"/>
<dbReference type="HOGENOM" id="CLU_004735_0_0_1"/>
<dbReference type="InParanoid" id="Q86US8"/>
<dbReference type="OMA" id="CSPDVWQ"/>
<dbReference type="OrthoDB" id="2017974at2759"/>
<dbReference type="PAN-GO" id="Q86US8">
    <property type="GO annotations" value="4 GO annotations based on evolutionary models"/>
</dbReference>
<dbReference type="PhylomeDB" id="Q86US8"/>
<dbReference type="TreeFam" id="TF327119"/>
<dbReference type="PathwayCommons" id="Q86US8"/>
<dbReference type="Reactome" id="R-HSA-975957">
    <property type="pathway name" value="Nonsense Mediated Decay (NMD) enhanced by the Exon Junction Complex (EJC)"/>
</dbReference>
<dbReference type="SignaLink" id="Q86US8"/>
<dbReference type="BioGRID-ORCS" id="23293">
    <property type="hits" value="681 hits in 1169 CRISPR screens"/>
</dbReference>
<dbReference type="CD-CODE" id="232F8A39">
    <property type="entry name" value="P-body"/>
</dbReference>
<dbReference type="CD-CODE" id="DEE660B4">
    <property type="entry name" value="Stress granule"/>
</dbReference>
<dbReference type="ChiTaRS" id="SMG6">
    <property type="organism name" value="human"/>
</dbReference>
<dbReference type="EvolutionaryTrace" id="Q86US8"/>
<dbReference type="GeneWiki" id="SMG6"/>
<dbReference type="GenomeRNAi" id="23293"/>
<dbReference type="Pharos" id="Q86US8">
    <property type="development level" value="Tbio"/>
</dbReference>
<dbReference type="PRO" id="PR:Q86US8"/>
<dbReference type="Proteomes" id="UP000005640">
    <property type="component" value="Chromosome 17"/>
</dbReference>
<dbReference type="RNAct" id="Q86US8">
    <property type="molecule type" value="protein"/>
</dbReference>
<dbReference type="Bgee" id="ENSG00000070366">
    <property type="expression patterns" value="Expressed in stromal cell of endometrium and 125 other cell types or tissues"/>
</dbReference>
<dbReference type="ExpressionAtlas" id="Q86US8">
    <property type="expression patterns" value="baseline and differential"/>
</dbReference>
<dbReference type="GO" id="GO:0000781">
    <property type="term" value="C:chromosome, telomeric region"/>
    <property type="evidence" value="ECO:0007669"/>
    <property type="project" value="UniProtKB-SubCell"/>
</dbReference>
<dbReference type="GO" id="GO:0036064">
    <property type="term" value="C:ciliary basal body"/>
    <property type="evidence" value="ECO:0000314"/>
    <property type="project" value="HPA"/>
</dbReference>
<dbReference type="GO" id="GO:0005737">
    <property type="term" value="C:cytoplasm"/>
    <property type="evidence" value="ECO:0000314"/>
    <property type="project" value="HGNC-UCL"/>
</dbReference>
<dbReference type="GO" id="GO:0005829">
    <property type="term" value="C:cytosol"/>
    <property type="evidence" value="ECO:0000314"/>
    <property type="project" value="HPA"/>
</dbReference>
<dbReference type="GO" id="GO:0005730">
    <property type="term" value="C:nucleolus"/>
    <property type="evidence" value="ECO:0000314"/>
    <property type="project" value="BHF-UCL"/>
</dbReference>
<dbReference type="GO" id="GO:0005634">
    <property type="term" value="C:nucleus"/>
    <property type="evidence" value="ECO:0000314"/>
    <property type="project" value="HGNC-UCL"/>
</dbReference>
<dbReference type="GO" id="GO:0005886">
    <property type="term" value="C:plasma membrane"/>
    <property type="evidence" value="ECO:0000314"/>
    <property type="project" value="HPA"/>
</dbReference>
<dbReference type="GO" id="GO:0005697">
    <property type="term" value="C:telomerase holoenzyme complex"/>
    <property type="evidence" value="ECO:0000318"/>
    <property type="project" value="GO_Central"/>
</dbReference>
<dbReference type="GO" id="GO:0070182">
    <property type="term" value="F:DNA polymerase binding"/>
    <property type="evidence" value="ECO:0000353"/>
    <property type="project" value="BHF-UCL"/>
</dbReference>
<dbReference type="GO" id="GO:0046872">
    <property type="term" value="F:metal ion binding"/>
    <property type="evidence" value="ECO:0007669"/>
    <property type="project" value="UniProtKB-KW"/>
</dbReference>
<dbReference type="GO" id="GO:0043021">
    <property type="term" value="F:ribonucleoprotein complex binding"/>
    <property type="evidence" value="ECO:0000353"/>
    <property type="project" value="BHF-UCL"/>
</dbReference>
<dbReference type="GO" id="GO:0003723">
    <property type="term" value="F:RNA binding"/>
    <property type="evidence" value="ECO:0000353"/>
    <property type="project" value="BHF-UCL"/>
</dbReference>
<dbReference type="GO" id="GO:0004521">
    <property type="term" value="F:RNA endonuclease activity"/>
    <property type="evidence" value="ECO:0000314"/>
    <property type="project" value="UniProtKB"/>
</dbReference>
<dbReference type="GO" id="GO:0070034">
    <property type="term" value="F:telomerase RNA binding"/>
    <property type="evidence" value="ECO:0000353"/>
    <property type="project" value="BHF-UCL"/>
</dbReference>
<dbReference type="GO" id="GO:0042162">
    <property type="term" value="F:telomeric DNA binding"/>
    <property type="evidence" value="ECO:0000314"/>
    <property type="project" value="HGNC-UCL"/>
</dbReference>
<dbReference type="GO" id="GO:0006406">
    <property type="term" value="P:mRNA export from nucleus"/>
    <property type="evidence" value="ECO:0000304"/>
    <property type="project" value="HGNC-UCL"/>
</dbReference>
<dbReference type="GO" id="GO:1904354">
    <property type="term" value="P:negative regulation of telomere capping"/>
    <property type="evidence" value="ECO:0000314"/>
    <property type="project" value="BHF-UCL"/>
</dbReference>
<dbReference type="GO" id="GO:0000184">
    <property type="term" value="P:nuclear-transcribed mRNA catabolic process, nonsense-mediated decay"/>
    <property type="evidence" value="ECO:0000315"/>
    <property type="project" value="UniProtKB"/>
</dbReference>
<dbReference type="GO" id="GO:0035303">
    <property type="term" value="P:regulation of dephosphorylation"/>
    <property type="evidence" value="ECO:0000304"/>
    <property type="project" value="HGNC-UCL"/>
</dbReference>
<dbReference type="GO" id="GO:0032204">
    <property type="term" value="P:regulation of telomere maintenance"/>
    <property type="evidence" value="ECO:0000315"/>
    <property type="project" value="BHF-UCL"/>
</dbReference>
<dbReference type="GO" id="GO:0032210">
    <property type="term" value="P:regulation of telomere maintenance via telomerase"/>
    <property type="evidence" value="ECO:0000304"/>
    <property type="project" value="BHF-UCL"/>
</dbReference>
<dbReference type="CDD" id="cd09885">
    <property type="entry name" value="PIN_Smg6-like"/>
    <property type="match status" value="1"/>
</dbReference>
<dbReference type="FunFam" id="1.25.40.10:FF:000094">
    <property type="entry name" value="telomerase-binding protein EST1A isoform X1"/>
    <property type="match status" value="1"/>
</dbReference>
<dbReference type="FunFam" id="3.40.50.1010:FF:000014">
    <property type="entry name" value="telomerase-binding protein EST1A isoform X1"/>
    <property type="match status" value="1"/>
</dbReference>
<dbReference type="Gene3D" id="3.40.50.1010">
    <property type="entry name" value="5'-nuclease"/>
    <property type="match status" value="1"/>
</dbReference>
<dbReference type="Gene3D" id="1.25.40.10">
    <property type="entry name" value="Tetratricopeptide repeat domain"/>
    <property type="match status" value="1"/>
</dbReference>
<dbReference type="InterPro" id="IPR018834">
    <property type="entry name" value="DNA/RNA-bd_Est1-type"/>
</dbReference>
<dbReference type="InterPro" id="IPR019458">
    <property type="entry name" value="Est1-like_N"/>
</dbReference>
<dbReference type="InterPro" id="IPR045153">
    <property type="entry name" value="Est1/Ebs1-like"/>
</dbReference>
<dbReference type="InterPro" id="IPR029060">
    <property type="entry name" value="PIN-like_dom_sf"/>
</dbReference>
<dbReference type="InterPro" id="IPR002716">
    <property type="entry name" value="PIN_dom"/>
</dbReference>
<dbReference type="InterPro" id="IPR011990">
    <property type="entry name" value="TPR-like_helical_dom_sf"/>
</dbReference>
<dbReference type="PANTHER" id="PTHR15696">
    <property type="entry name" value="SMG-7 SUPPRESSOR WITH MORPHOLOGICAL EFFECT ON GENITALIA PROTEIN 7"/>
    <property type="match status" value="1"/>
</dbReference>
<dbReference type="PANTHER" id="PTHR15696:SF0">
    <property type="entry name" value="TELOMERASE-BINDING PROTEIN EST1A"/>
    <property type="match status" value="1"/>
</dbReference>
<dbReference type="Pfam" id="PF10374">
    <property type="entry name" value="EST1"/>
    <property type="match status" value="1"/>
</dbReference>
<dbReference type="Pfam" id="PF10373">
    <property type="entry name" value="EST1_DNA_bind"/>
    <property type="match status" value="1"/>
</dbReference>
<dbReference type="Pfam" id="PF13638">
    <property type="entry name" value="PIN_4"/>
    <property type="match status" value="1"/>
</dbReference>
<dbReference type="SMART" id="SM00670">
    <property type="entry name" value="PINc"/>
    <property type="match status" value="1"/>
</dbReference>
<dbReference type="SUPFAM" id="SSF88723">
    <property type="entry name" value="PIN domain-like"/>
    <property type="match status" value="1"/>
</dbReference>
<dbReference type="SUPFAM" id="SSF48452">
    <property type="entry name" value="TPR-like"/>
    <property type="match status" value="1"/>
</dbReference>
<feature type="chain" id="PRO_0000087069" description="Telomerase-binding protein EST1A">
    <location>
        <begin position="1"/>
        <end position="1419"/>
    </location>
</feature>
<feature type="domain" description="PINc">
    <location>
        <begin position="1246"/>
        <end position="1397"/>
    </location>
</feature>
<feature type="region of interest" description="Disordered" evidence="3">
    <location>
        <begin position="25"/>
        <end position="79"/>
    </location>
</feature>
<feature type="region of interest" description="EJC-binding motif 1; mediates interaction with the EJC">
    <location>
        <begin position="39"/>
        <end position="59"/>
    </location>
</feature>
<feature type="region of interest" description="Disordered" evidence="3">
    <location>
        <begin position="99"/>
        <end position="165"/>
    </location>
</feature>
<feature type="region of interest" description="Interaction with telomeric DNA">
    <location>
        <begin position="114"/>
        <end position="503"/>
    </location>
</feature>
<feature type="region of interest" description="EJC-binding motif 2; mediates interaction with the EJC">
    <location>
        <begin position="133"/>
        <end position="153"/>
    </location>
</feature>
<feature type="region of interest" description="Disordered" evidence="3">
    <location>
        <begin position="177"/>
        <end position="405"/>
    </location>
</feature>
<feature type="region of interest" description="Disordered" evidence="3">
    <location>
        <begin position="419"/>
        <end position="472"/>
    </location>
</feature>
<feature type="region of interest" description="Disordered" evidence="3">
    <location>
        <begin position="854"/>
        <end position="883"/>
    </location>
</feature>
<feature type="coiled-coil region" evidence="2">
    <location>
        <begin position="163"/>
        <end position="193"/>
    </location>
</feature>
<feature type="coiled-coil region" evidence="2">
    <location>
        <begin position="567"/>
        <end position="625"/>
    </location>
</feature>
<feature type="coiled-coil region" evidence="2">
    <location>
        <begin position="1197"/>
        <end position="1239"/>
    </location>
</feature>
<feature type="compositionally biased region" description="Basic and acidic residues" evidence="3">
    <location>
        <begin position="30"/>
        <end position="51"/>
    </location>
</feature>
<feature type="compositionally biased region" description="Basic and acidic residues" evidence="3">
    <location>
        <begin position="64"/>
        <end position="79"/>
    </location>
</feature>
<feature type="compositionally biased region" description="Basic and acidic residues" evidence="3">
    <location>
        <begin position="182"/>
        <end position="202"/>
    </location>
</feature>
<feature type="compositionally biased region" description="Basic and acidic residues" evidence="3">
    <location>
        <begin position="213"/>
        <end position="235"/>
    </location>
</feature>
<feature type="compositionally biased region" description="Low complexity" evidence="3">
    <location>
        <begin position="257"/>
        <end position="272"/>
    </location>
</feature>
<feature type="compositionally biased region" description="Basic residues" evidence="3">
    <location>
        <begin position="279"/>
        <end position="294"/>
    </location>
</feature>
<feature type="compositionally biased region" description="Acidic residues" evidence="3">
    <location>
        <begin position="303"/>
        <end position="313"/>
    </location>
</feature>
<feature type="compositionally biased region" description="Basic and acidic residues" evidence="3">
    <location>
        <begin position="328"/>
        <end position="348"/>
    </location>
</feature>
<feature type="compositionally biased region" description="Basic and acidic residues" evidence="3">
    <location>
        <begin position="368"/>
        <end position="380"/>
    </location>
</feature>
<feature type="compositionally biased region" description="Basic and acidic residues" evidence="3">
    <location>
        <begin position="388"/>
        <end position="403"/>
    </location>
</feature>
<feature type="compositionally biased region" description="Low complexity" evidence="3">
    <location>
        <begin position="437"/>
        <end position="446"/>
    </location>
</feature>
<feature type="binding site" evidence="18">
    <location>
        <position position="1251"/>
    </location>
    <ligand>
        <name>Mn(2+)</name>
        <dbReference type="ChEBI" id="CHEBI:29035"/>
        <note>catalytic</note>
    </ligand>
</feature>
<feature type="binding site" evidence="18">
    <location>
        <position position="1353"/>
    </location>
    <ligand>
        <name>Mn(2+)</name>
        <dbReference type="ChEBI" id="CHEBI:29035"/>
        <note>catalytic</note>
    </ligand>
</feature>
<feature type="binding site" evidence="18">
    <location>
        <position position="1392"/>
    </location>
    <ligand>
        <name>Mn(2+)</name>
        <dbReference type="ChEBI" id="CHEBI:29035"/>
        <note>catalytic</note>
    </ligand>
</feature>
<feature type="modified residue" description="Phosphoserine" evidence="22">
    <location>
        <position position="203"/>
    </location>
</feature>
<feature type="modified residue" description="Phosphoserine" evidence="1">
    <location>
        <position position="332"/>
    </location>
</feature>
<feature type="modified residue" description="Omega-N-methylarginine" evidence="1">
    <location>
        <position position="406"/>
    </location>
</feature>
<feature type="modified residue" description="Omega-N-methylarginine" evidence="1">
    <location>
        <position position="433"/>
    </location>
</feature>
<feature type="modified residue" description="Phosphothreonine" evidence="1">
    <location>
        <position position="471"/>
    </location>
</feature>
<feature type="modified residue" description="Phosphothreonine" evidence="21 22">
    <location>
        <position position="479"/>
    </location>
</feature>
<feature type="modified residue" description="Phosphoserine" evidence="22">
    <location>
        <position position="484"/>
    </location>
</feature>
<feature type="modified residue" description="Phosphoserine" evidence="22">
    <location>
        <position position="831"/>
    </location>
</feature>
<feature type="modified residue" description="Phosphoserine" evidence="22">
    <location>
        <position position="870"/>
    </location>
</feature>
<feature type="modified residue" description="Phosphoserine" evidence="22">
    <location>
        <position position="874"/>
    </location>
</feature>
<feature type="splice variant" id="VSP_010360" description="In isoform 2." evidence="17">
    <location>
        <begin position="1"/>
        <end position="1089"/>
    </location>
</feature>
<feature type="splice variant" id="VSP_047157" description="In isoform 3." evidence="16">
    <location>
        <begin position="1"/>
        <end position="908"/>
    </location>
</feature>
<feature type="splice variant" id="VSP_010361" description="In isoform 2." evidence="17">
    <original>ILEEDRLLSGFVPLLAAPQDPCYVEKTSDK</original>
    <variation>MRFRLCHQRGCCPHERENTCTCKMIISSLQ</variation>
    <location>
        <begin position="1090"/>
        <end position="1119"/>
    </location>
</feature>
<feature type="sequence variant" id="VAR_018499" description="In dbSNP:rs1885986." evidence="13">
    <original>R</original>
    <variation>P</variation>
    <location>
        <position position="291"/>
    </location>
</feature>
<feature type="sequence variant" id="VAR_018500" description="In dbSNP:rs216195.">
    <original>K</original>
    <variation>Q</variation>
    <location>
        <position position="294"/>
    </location>
</feature>
<feature type="sequence variant" id="VAR_018501" description="In dbSNP:rs1885987." evidence="5 13">
    <original>N</original>
    <variation>T</variation>
    <location>
        <position position="341"/>
    </location>
</feature>
<feature type="sequence variant" id="VAR_050978" description="In dbSNP:rs34047637.">
    <original>N</original>
    <variation>S</variation>
    <location>
        <position position="575"/>
    </location>
</feature>
<feature type="sequence variant" id="VAR_018502" description="In dbSNP:rs903160.">
    <original>A</original>
    <variation>T</variation>
    <location>
        <position position="972"/>
    </location>
</feature>
<feature type="sequence variant" id="VAR_050979" description="In dbSNP:rs35173108.">
    <original>R</original>
    <variation>C</variation>
    <location>
        <position position="984"/>
    </location>
</feature>
<feature type="sequence variant" id="VAR_061648" description="In dbSNP:rs58801957.">
    <original>E</original>
    <variation>K</variation>
    <location>
        <position position="1189"/>
    </location>
</feature>
<feature type="sequence variant" id="VAR_018503" description="In dbSNP:rs2273980.">
    <original>H</original>
    <variation>R</variation>
    <location>
        <position position="1233"/>
    </location>
</feature>
<feature type="mutagenesis site" description="Alters interaction with the EJC. Loss of interaction with the EJC; when associated with 140-E--E-146." evidence="11">
    <original>RPDLEIY</original>
    <variation>EPDLEIE</variation>
    <location>
        <begin position="46"/>
        <end position="52"/>
    </location>
</feature>
<feature type="mutagenesis site" description="Alters interaction with the EJC. Loss of interaction with the EJC; when associated with 46-E--E-52." evidence="11">
    <original>KPDLQIY</original>
    <variation>EPDLQIE</variation>
    <location>
        <begin position="140"/>
        <end position="146"/>
    </location>
</feature>
<feature type="mutagenesis site" description="Impaired nonsense-mediated RNA decay." evidence="8 9">
    <original>D</original>
    <variation>A</variation>
    <location>
        <position position="1251"/>
    </location>
</feature>
<feature type="mutagenesis site" description="Loss of endonuclease activity and nonsense-mediated RNA decay; when associated with N-1392." evidence="8 9">
    <original>D</original>
    <variation>N</variation>
    <location>
        <position position="1251"/>
    </location>
</feature>
<feature type="mutagenesis site" description="Abolishes RNase activity." evidence="7 9">
    <original>D</original>
    <variation>A</variation>
    <location>
        <position position="1353"/>
    </location>
</feature>
<feature type="mutagenesis site" description="Impaired nonsense-mediated RNA decay; when associated with A-1251." evidence="8 9">
    <original>D</original>
    <variation>A</variation>
    <location>
        <position position="1392"/>
    </location>
</feature>
<feature type="mutagenesis site" description="Loss of endonuclease activity and nonsense-mediated RNA decay; when associated with N-1251." evidence="8 9">
    <original>D</original>
    <variation>N</variation>
    <location>
        <position position="1392"/>
    </location>
</feature>
<feature type="strand" evidence="25">
    <location>
        <begin position="408"/>
        <end position="410"/>
    </location>
</feature>
<feature type="helix" evidence="24">
    <location>
        <begin position="580"/>
        <end position="600"/>
    </location>
</feature>
<feature type="strand" evidence="24">
    <location>
        <begin position="601"/>
        <end position="603"/>
    </location>
</feature>
<feature type="helix" evidence="24">
    <location>
        <begin position="606"/>
        <end position="629"/>
    </location>
</feature>
<feature type="helix" evidence="24">
    <location>
        <begin position="631"/>
        <end position="636"/>
    </location>
</feature>
<feature type="helix" evidence="24">
    <location>
        <begin position="639"/>
        <end position="647"/>
    </location>
</feature>
<feature type="helix" evidence="24">
    <location>
        <begin position="649"/>
        <end position="660"/>
    </location>
</feature>
<feature type="helix" evidence="24">
    <location>
        <begin position="667"/>
        <end position="696"/>
    </location>
</feature>
<feature type="helix" evidence="24">
    <location>
        <begin position="700"/>
        <end position="703"/>
    </location>
</feature>
<feature type="helix" evidence="24">
    <location>
        <begin position="716"/>
        <end position="742"/>
    </location>
</feature>
<feature type="helix" evidence="24">
    <location>
        <begin position="749"/>
        <end position="761"/>
    </location>
</feature>
<feature type="helix" evidence="24">
    <location>
        <begin position="767"/>
        <end position="778"/>
    </location>
</feature>
<feature type="helix" evidence="24">
    <location>
        <begin position="782"/>
        <end position="793"/>
    </location>
</feature>
<feature type="strand" evidence="24">
    <location>
        <begin position="795"/>
        <end position="797"/>
    </location>
</feature>
<feature type="helix" evidence="24">
    <location>
        <begin position="801"/>
        <end position="820"/>
    </location>
</feature>
<feature type="helix" evidence="24">
    <location>
        <begin position="880"/>
        <end position="882"/>
    </location>
</feature>
<feature type="helix" evidence="24">
    <location>
        <begin position="885"/>
        <end position="905"/>
    </location>
</feature>
<feature type="helix" evidence="24">
    <location>
        <begin position="909"/>
        <end position="911"/>
    </location>
</feature>
<feature type="helix" evidence="24">
    <location>
        <begin position="912"/>
        <end position="928"/>
    </location>
</feature>
<feature type="strand" evidence="24">
    <location>
        <begin position="929"/>
        <end position="931"/>
    </location>
</feature>
<feature type="helix" evidence="24">
    <location>
        <begin position="936"/>
        <end position="951"/>
    </location>
</feature>
<feature type="helix" evidence="24">
    <location>
        <begin position="966"/>
        <end position="992"/>
    </location>
</feature>
<feature type="helix" evidence="24">
    <location>
        <begin position="1001"/>
        <end position="1003"/>
    </location>
</feature>
<feature type="helix" evidence="24">
    <location>
        <begin position="1006"/>
        <end position="1008"/>
    </location>
</feature>
<feature type="helix" evidence="24">
    <location>
        <begin position="1012"/>
        <end position="1014"/>
    </location>
</feature>
<feature type="helix" evidence="24">
    <location>
        <begin position="1017"/>
        <end position="1020"/>
    </location>
</feature>
<feature type="helix" evidence="24">
    <location>
        <begin position="1023"/>
        <end position="1035"/>
    </location>
</feature>
<feature type="helix" evidence="24">
    <location>
        <begin position="1037"/>
        <end position="1039"/>
    </location>
</feature>
<feature type="helix" evidence="24">
    <location>
        <begin position="1057"/>
        <end position="1068"/>
    </location>
</feature>
<feature type="strand" evidence="24">
    <location>
        <begin position="1079"/>
        <end position="1081"/>
    </location>
</feature>
<feature type="strand" evidence="24">
    <location>
        <begin position="1086"/>
        <end position="1088"/>
    </location>
</feature>
<feature type="helix" evidence="24">
    <location>
        <begin position="1092"/>
        <end position="1097"/>
    </location>
</feature>
<feature type="helix" evidence="24">
    <location>
        <begin position="1101"/>
        <end position="1105"/>
    </location>
</feature>
<feature type="strand" evidence="24">
    <location>
        <begin position="1112"/>
        <end position="1114"/>
    </location>
</feature>
<feature type="helix" evidence="24">
    <location>
        <begin position="1119"/>
        <end position="1139"/>
    </location>
</feature>
<feature type="strand" evidence="24">
    <location>
        <begin position="1140"/>
        <end position="1143"/>
    </location>
</feature>
<feature type="strand" evidence="24">
    <location>
        <begin position="1145"/>
        <end position="1149"/>
    </location>
</feature>
<feature type="strand" evidence="24">
    <location>
        <begin position="1152"/>
        <end position="1155"/>
    </location>
</feature>
<feature type="strand" evidence="23">
    <location>
        <begin position="1240"/>
        <end position="1250"/>
    </location>
</feature>
<feature type="helix" evidence="23">
    <location>
        <begin position="1252"/>
        <end position="1268"/>
    </location>
</feature>
<feature type="strand" evidence="23">
    <location>
        <begin position="1270"/>
        <end position="1276"/>
    </location>
</feature>
<feature type="helix" evidence="23">
    <location>
        <begin position="1277"/>
        <end position="1287"/>
    </location>
</feature>
<feature type="helix" evidence="23">
    <location>
        <begin position="1298"/>
        <end position="1319"/>
    </location>
</feature>
<feature type="strand" evidence="23">
    <location>
        <begin position="1325"/>
        <end position="1328"/>
    </location>
</feature>
<feature type="strand" evidence="23">
    <location>
        <begin position="1334"/>
        <end position="1336"/>
    </location>
</feature>
<feature type="helix" evidence="23">
    <location>
        <begin position="1352"/>
        <end position="1361"/>
    </location>
</feature>
<feature type="helix" evidence="23">
    <location>
        <begin position="1368"/>
        <end position="1371"/>
    </location>
</feature>
<feature type="strand" evidence="23">
    <location>
        <begin position="1381"/>
        <end position="1389"/>
    </location>
</feature>
<feature type="helix" evidence="23">
    <location>
        <begin position="1393"/>
        <end position="1401"/>
    </location>
</feature>
<feature type="helix" evidence="23">
    <location>
        <begin position="1409"/>
        <end position="1416"/>
    </location>
</feature>
<evidence type="ECO:0000250" key="1">
    <source>
        <dbReference type="UniProtKB" id="P61406"/>
    </source>
</evidence>
<evidence type="ECO:0000255" key="2"/>
<evidence type="ECO:0000256" key="3">
    <source>
        <dbReference type="SAM" id="MobiDB-lite"/>
    </source>
</evidence>
<evidence type="ECO:0000269" key="4">
    <source>
    </source>
</evidence>
<evidence type="ECO:0000269" key="5">
    <source>
    </source>
</evidence>
<evidence type="ECO:0000269" key="6">
    <source>
    </source>
</evidence>
<evidence type="ECO:0000269" key="7">
    <source>
    </source>
</evidence>
<evidence type="ECO:0000269" key="8">
    <source>
    </source>
</evidence>
<evidence type="ECO:0000269" key="9">
    <source>
    </source>
</evidence>
<evidence type="ECO:0000269" key="10">
    <source>
    </source>
</evidence>
<evidence type="ECO:0000269" key="11">
    <source>
    </source>
</evidence>
<evidence type="ECO:0000269" key="12">
    <source>
    </source>
</evidence>
<evidence type="ECO:0000269" key="13">
    <source>
    </source>
</evidence>
<evidence type="ECO:0000303" key="14">
    <source>
    </source>
</evidence>
<evidence type="ECO:0000303" key="15">
    <source>
    </source>
</evidence>
<evidence type="ECO:0000303" key="16">
    <source>
    </source>
</evidence>
<evidence type="ECO:0000303" key="17">
    <source>
    </source>
</evidence>
<evidence type="ECO:0000305" key="18"/>
<evidence type="ECO:0000305" key="19">
    <source>
    </source>
</evidence>
<evidence type="ECO:0000312" key="20">
    <source>
        <dbReference type="HGNC" id="HGNC:17809"/>
    </source>
</evidence>
<evidence type="ECO:0007744" key="21">
    <source>
    </source>
</evidence>
<evidence type="ECO:0007744" key="22">
    <source>
    </source>
</evidence>
<evidence type="ECO:0007829" key="23">
    <source>
        <dbReference type="PDB" id="2DOK"/>
    </source>
</evidence>
<evidence type="ECO:0007829" key="24">
    <source>
        <dbReference type="PDB" id="4UM2"/>
    </source>
</evidence>
<evidence type="ECO:0007829" key="25">
    <source>
        <dbReference type="PDB" id="8RXB"/>
    </source>
</evidence>
<keyword id="KW-0002">3D-structure</keyword>
<keyword id="KW-0025">Alternative splicing</keyword>
<keyword id="KW-0158">Chromosome</keyword>
<keyword id="KW-0175">Coiled coil</keyword>
<keyword id="KW-0963">Cytoplasm</keyword>
<keyword id="KW-0238">DNA-binding</keyword>
<keyword id="KW-0255">Endonuclease</keyword>
<keyword id="KW-0378">Hydrolase</keyword>
<keyword id="KW-0464">Manganese</keyword>
<keyword id="KW-0479">Metal-binding</keyword>
<keyword id="KW-0488">Methylation</keyword>
<keyword id="KW-0866">Nonsense-mediated mRNA decay</keyword>
<keyword id="KW-0540">Nuclease</keyword>
<keyword id="KW-0539">Nucleus</keyword>
<keyword id="KW-0597">Phosphoprotein</keyword>
<keyword id="KW-1267">Proteomics identification</keyword>
<keyword id="KW-1185">Reference proteome</keyword>
<keyword id="KW-0779">Telomere</keyword>
<protein>
    <recommendedName>
        <fullName evidence="18">Telomerase-binding protein EST1A</fullName>
        <ecNumber>3.1.-.-</ecNumber>
    </recommendedName>
    <alternativeName>
        <fullName evidence="15">Ever shorter telomeres 1A</fullName>
        <shortName evidence="15">hEST1A</shortName>
    </alternativeName>
    <alternativeName>
        <fullName evidence="20">Nonsense mediated mRNA decay factor SMG6</fullName>
    </alternativeName>
    <alternativeName>
        <fullName evidence="20">Smg-6 homolog</fullName>
    </alternativeName>
    <alternativeName>
        <fullName evidence="14">hSmg5/7a</fullName>
    </alternativeName>
</protein>